<comment type="function">
    <text evidence="1 5">Thioesterase; part of the gene cluster that mediates the biosynthesis of oxaleimides, cytotoxic compounds containing an unusual disubstituted succinimide moiety (PubMed:28365998). The first step of the pathway is provided by the HR-PKS poxF that serves in a new mode of collaborative biosynthesis with the PKS-NRPS poxE, by providing the olefin containing amino acid substrate via the synthesis of an ACP-bound dec-4-enoate (PubMed:28365998). The cytochrome P450 monooxygenase poxM-catalyzed oxidation at the alpha-position creates the enzyme-bound 2-hydroxydec-4-enoyl-ACP thioester, which may be prone to spontaneous hydrolysis to yield 2-hydroxydec-4-enoic acid due to increased electrophilicity of the carbonyl (PubMed:28365998). 2-hydroxydec-4-enoic acid can then be further oxidized by poxM to yield the alpha-ketoacid 2-oxodec-4-enoicacid, which is reductively aminated by the aminotransferase poxL to yield (S,E)-2-aminodec-4-enoic acid (PubMed:28365998). The Hybrid PKS-NRPS synthetase poxE then performs condensation between the octaketide product of its PKS modules and the amino group of (S,E)-2-aminodec-4-enoic acid which is activated and incorporated by the adenylation domain (PubMed:28365998). The resulting aminoacyl product can be cyclized by the Diels-Alderase PoxQ and reductively released by the reductive (R) domain of poxE to yield an aldehyde intermediate (Probable) (PubMed:28365998). The released aldehyde is then substrate for a Knoevenagel condensation by the hydrolyase poxO followed by an oxidation at the 5-position of the pyrrolidone ring (PubMed:28365998). The presence of the olefin from the amino acid building block allows for migration of the substituted allyl group to occur (PubMed:28365998). This allylic transposition reaction takes place in a conjugate addition, semipinacol-like fashion to yield a succinimide intermediate (PubMed:28365998). Iterative two-electron oxidations of the C7 methyl of the succinimide intermediate to the carboxylic acid can be catalyzed by one of two remaining cytochrome P450 monooxygenasess poxC or poxD to yield oxaleimide A (PubMed:28365998). Subsequent oxidation yields the maleimide scaffold oxaleimide I (PubMed:28365998). Both oxaleimide A and oxaleimide I can undergo oxidative modifications in the decalin ring to yield the series of products oxaleimides B to H (PubMed:28365998).</text>
</comment>
<comment type="pathway">
    <text evidence="4">Secondary metabolite biosynthesis.</text>
</comment>
<comment type="induction">
    <text evidence="1">Expression is positively regulated by the oxaleimides biosynthesis cluster-specific transcription factor poxB.</text>
</comment>
<comment type="similarity">
    <text evidence="3">Belongs to the lcsJ thioesterase family.</text>
</comment>
<organism>
    <name type="scientific">Penicillium oxalicum (strain 114-2 / CGMCC 5302)</name>
    <name type="common">Penicillium decumbens</name>
    <dbReference type="NCBI Taxonomy" id="933388"/>
    <lineage>
        <taxon>Eukaryota</taxon>
        <taxon>Fungi</taxon>
        <taxon>Dikarya</taxon>
        <taxon>Ascomycota</taxon>
        <taxon>Pezizomycotina</taxon>
        <taxon>Eurotiomycetes</taxon>
        <taxon>Eurotiomycetidae</taxon>
        <taxon>Eurotiales</taxon>
        <taxon>Aspergillaceae</taxon>
        <taxon>Penicillium</taxon>
    </lineage>
</organism>
<keyword id="KW-1185">Reference proteome</keyword>
<keyword id="KW-0808">Transferase</keyword>
<reference key="1">
    <citation type="journal article" date="2013" name="PLoS ONE">
        <title>Genomic and secretomic analyses reveal unique features of the lignocellulolytic enzyme system of Penicillium decumbens.</title>
        <authorList>
            <person name="Liu G."/>
            <person name="Zhang L."/>
            <person name="Wei X."/>
            <person name="Zou G."/>
            <person name="Qin Y."/>
            <person name="Ma L."/>
            <person name="Li J."/>
            <person name="Zheng H."/>
            <person name="Wang S."/>
            <person name="Wang C."/>
            <person name="Xun L."/>
            <person name="Zhao G.-P."/>
            <person name="Zhou Z."/>
            <person name="Qu Y."/>
        </authorList>
    </citation>
    <scope>NUCLEOTIDE SEQUENCE [LARGE SCALE GENOMIC DNA]</scope>
    <source>
        <strain>114-2 / CGMCC 5302</strain>
    </source>
</reference>
<reference key="2">
    <citation type="journal article" date="2017" name="J. Am. Chem. Soc.">
        <title>Collaborative Biosynthesis of Maleimide- and Succinimide-Containing Natural Products by Fungal Polyketide Megasynthases.</title>
        <authorList>
            <person name="Sato M."/>
            <person name="Dander J.E."/>
            <person name="Sato C."/>
            <person name="Hung Y.S."/>
            <person name="Gao S.S."/>
            <person name="Tang M.C."/>
            <person name="Hang L."/>
            <person name="Winter J.M."/>
            <person name="Garg N.K."/>
            <person name="Watanabe K."/>
            <person name="Tang Y."/>
        </authorList>
    </citation>
    <scope>FUNCTION</scope>
    <scope>INDUCTION</scope>
    <scope>PATHWAY</scope>
</reference>
<reference key="3">
    <citation type="journal article" date="2020" name="Chem. Commun. (Camb.)">
        <title>Evidence for enzyme catalysed intramolecular [4+2] Diels-Alder cyclization during the biosynthesis of pyrichalasin H.</title>
        <authorList>
            <person name="Hantke V."/>
            <person name="Skellam E.J."/>
            <person name="Cox R.J."/>
        </authorList>
    </citation>
    <scope>FUNCTION</scope>
</reference>
<feature type="chain" id="PRO_0000453782" description="Thioesterase poxG">
    <location>
        <begin position="1"/>
        <end position="303"/>
    </location>
</feature>
<gene>
    <name evidence="2" type="primary">poxG</name>
    <name type="ORF">PDE_04019</name>
</gene>
<accession>S7ZEI0</accession>
<dbReference type="EC" id="2.3.1.-" evidence="4"/>
<dbReference type="EMBL" id="KB644411">
    <property type="protein sequence ID" value="EPS29070.1"/>
    <property type="molecule type" value="Genomic_DNA"/>
</dbReference>
<dbReference type="SMR" id="S7ZEI0"/>
<dbReference type="eggNOG" id="KOG4366">
    <property type="taxonomic scope" value="Eukaryota"/>
</dbReference>
<dbReference type="HOGENOM" id="CLU_040660_0_1_1"/>
<dbReference type="OrthoDB" id="265761at2759"/>
<dbReference type="PhylomeDB" id="S7ZEI0"/>
<dbReference type="Proteomes" id="UP000019376">
    <property type="component" value="Unassembled WGS sequence"/>
</dbReference>
<dbReference type="GO" id="GO:0016740">
    <property type="term" value="F:transferase activity"/>
    <property type="evidence" value="ECO:0007669"/>
    <property type="project" value="UniProtKB-KW"/>
</dbReference>
<dbReference type="InterPro" id="IPR029069">
    <property type="entry name" value="HotDog_dom_sf"/>
</dbReference>
<dbReference type="InterPro" id="IPR051490">
    <property type="entry name" value="THEM6_lcsJ_thioesterase"/>
</dbReference>
<dbReference type="PANTHER" id="PTHR12475">
    <property type="match status" value="1"/>
</dbReference>
<dbReference type="PANTHER" id="PTHR12475:SF4">
    <property type="entry name" value="PROTEIN THEM6"/>
    <property type="match status" value="1"/>
</dbReference>
<dbReference type="Pfam" id="PF13279">
    <property type="entry name" value="4HBT_2"/>
    <property type="match status" value="1"/>
</dbReference>
<dbReference type="SUPFAM" id="SSF54637">
    <property type="entry name" value="Thioesterase/thiol ester dehydrase-isomerase"/>
    <property type="match status" value="1"/>
</dbReference>
<protein>
    <recommendedName>
        <fullName evidence="2">Thioesterase poxG</fullName>
        <ecNumber evidence="4">2.3.1.-</ecNumber>
    </recommendedName>
    <alternativeName>
        <fullName evidence="2">Oxaleimides biosynthesis cluster protein G</fullName>
    </alternativeName>
</protein>
<evidence type="ECO:0000269" key="1">
    <source>
    </source>
</evidence>
<evidence type="ECO:0000303" key="2">
    <source>
    </source>
</evidence>
<evidence type="ECO:0000305" key="3"/>
<evidence type="ECO:0000305" key="4">
    <source>
    </source>
</evidence>
<evidence type="ECO:0000305" key="5">
    <source>
    </source>
</evidence>
<name>POXG_PENO1</name>
<sequence length="303" mass="34409">MVSLSCLISYGECLLETVQTHPWSTIGVVVFLSSVKNAPLMWHARLIIAVFYHSVTRKNDVVTIERYGRQGLFGYIVTSSRSPLYECDINGHKSDSTYFSDLDINRIHLITRLFKGAGDLSLRPDRPNVAPEDRPKKMRVLLGGTCCSFRREIKPYAAYEIHSRVLAWDEKWLYVVSYFVKPGSARKMASLQTEVGDKCEMTDLARSMVFTSAITKFVFKDGRKTVRPADALEEMGLLSASEEVVETSEAGEDLWTRSRVEERRKTGIKIAQHFIALDELHDQFEHVSEHPFLGKFGVLGTMF</sequence>
<proteinExistence type="evidence at transcript level"/>